<dbReference type="EC" id="2.8.4.3" evidence="1"/>
<dbReference type="EMBL" id="CP000975">
    <property type="protein sequence ID" value="ACD82774.1"/>
    <property type="molecule type" value="Genomic_DNA"/>
</dbReference>
<dbReference type="RefSeq" id="WP_012463056.1">
    <property type="nucleotide sequence ID" value="NC_010794.1"/>
</dbReference>
<dbReference type="SMR" id="B3E0M0"/>
<dbReference type="STRING" id="481448.Minf_0719"/>
<dbReference type="KEGG" id="min:Minf_0719"/>
<dbReference type="eggNOG" id="COG0621">
    <property type="taxonomic scope" value="Bacteria"/>
</dbReference>
<dbReference type="HOGENOM" id="CLU_018697_2_0_0"/>
<dbReference type="OrthoDB" id="9805215at2"/>
<dbReference type="Proteomes" id="UP000009149">
    <property type="component" value="Chromosome"/>
</dbReference>
<dbReference type="GO" id="GO:0005829">
    <property type="term" value="C:cytosol"/>
    <property type="evidence" value="ECO:0007669"/>
    <property type="project" value="TreeGrafter"/>
</dbReference>
<dbReference type="GO" id="GO:0051539">
    <property type="term" value="F:4 iron, 4 sulfur cluster binding"/>
    <property type="evidence" value="ECO:0007669"/>
    <property type="project" value="UniProtKB-UniRule"/>
</dbReference>
<dbReference type="GO" id="GO:0046872">
    <property type="term" value="F:metal ion binding"/>
    <property type="evidence" value="ECO:0007669"/>
    <property type="project" value="UniProtKB-KW"/>
</dbReference>
<dbReference type="GO" id="GO:0035597">
    <property type="term" value="F:N6-isopentenyladenosine methylthiotransferase activity"/>
    <property type="evidence" value="ECO:0007669"/>
    <property type="project" value="TreeGrafter"/>
</dbReference>
<dbReference type="CDD" id="cd01335">
    <property type="entry name" value="Radical_SAM"/>
    <property type="match status" value="1"/>
</dbReference>
<dbReference type="FunFam" id="3.40.50.12160:FF:000003">
    <property type="entry name" value="CDK5 regulatory subunit-associated protein 1"/>
    <property type="match status" value="1"/>
</dbReference>
<dbReference type="FunFam" id="3.80.30.20:FF:000001">
    <property type="entry name" value="tRNA-2-methylthio-N(6)-dimethylallyladenosine synthase 2"/>
    <property type="match status" value="1"/>
</dbReference>
<dbReference type="Gene3D" id="3.40.50.12160">
    <property type="entry name" value="Methylthiotransferase, N-terminal domain"/>
    <property type="match status" value="1"/>
</dbReference>
<dbReference type="Gene3D" id="3.80.30.20">
    <property type="entry name" value="tm_1862 like domain"/>
    <property type="match status" value="1"/>
</dbReference>
<dbReference type="HAMAP" id="MF_01864">
    <property type="entry name" value="tRNA_metthiotr_MiaB"/>
    <property type="match status" value="1"/>
</dbReference>
<dbReference type="InterPro" id="IPR006638">
    <property type="entry name" value="Elp3/MiaA/NifB-like_rSAM"/>
</dbReference>
<dbReference type="InterPro" id="IPR005839">
    <property type="entry name" value="Methylthiotransferase"/>
</dbReference>
<dbReference type="InterPro" id="IPR020612">
    <property type="entry name" value="Methylthiotransferase_CS"/>
</dbReference>
<dbReference type="InterPro" id="IPR013848">
    <property type="entry name" value="Methylthiotransferase_N"/>
</dbReference>
<dbReference type="InterPro" id="IPR038135">
    <property type="entry name" value="Methylthiotransferase_N_sf"/>
</dbReference>
<dbReference type="InterPro" id="IPR006463">
    <property type="entry name" value="MiaB_methiolase"/>
</dbReference>
<dbReference type="InterPro" id="IPR007197">
    <property type="entry name" value="rSAM"/>
</dbReference>
<dbReference type="InterPro" id="IPR023404">
    <property type="entry name" value="rSAM_horseshoe"/>
</dbReference>
<dbReference type="InterPro" id="IPR002792">
    <property type="entry name" value="TRAM_dom"/>
</dbReference>
<dbReference type="NCBIfam" id="TIGR01574">
    <property type="entry name" value="miaB-methiolase"/>
    <property type="match status" value="1"/>
</dbReference>
<dbReference type="NCBIfam" id="TIGR00089">
    <property type="entry name" value="MiaB/RimO family radical SAM methylthiotransferase"/>
    <property type="match status" value="1"/>
</dbReference>
<dbReference type="PANTHER" id="PTHR43020">
    <property type="entry name" value="CDK5 REGULATORY SUBUNIT-ASSOCIATED PROTEIN 1"/>
    <property type="match status" value="1"/>
</dbReference>
<dbReference type="PANTHER" id="PTHR43020:SF2">
    <property type="entry name" value="MITOCHONDRIAL TRNA METHYLTHIOTRANSFERASE CDK5RAP1"/>
    <property type="match status" value="1"/>
</dbReference>
<dbReference type="Pfam" id="PF04055">
    <property type="entry name" value="Radical_SAM"/>
    <property type="match status" value="1"/>
</dbReference>
<dbReference type="Pfam" id="PF01938">
    <property type="entry name" value="TRAM"/>
    <property type="match status" value="1"/>
</dbReference>
<dbReference type="Pfam" id="PF00919">
    <property type="entry name" value="UPF0004"/>
    <property type="match status" value="1"/>
</dbReference>
<dbReference type="SFLD" id="SFLDF00273">
    <property type="entry name" value="(dimethylallyl)adenosine_tRNA"/>
    <property type="match status" value="1"/>
</dbReference>
<dbReference type="SFLD" id="SFLDG01082">
    <property type="entry name" value="B12-binding_domain_containing"/>
    <property type="match status" value="1"/>
</dbReference>
<dbReference type="SFLD" id="SFLDS00029">
    <property type="entry name" value="Radical_SAM"/>
    <property type="match status" value="1"/>
</dbReference>
<dbReference type="SMART" id="SM00729">
    <property type="entry name" value="Elp3"/>
    <property type="match status" value="1"/>
</dbReference>
<dbReference type="SUPFAM" id="SSF102114">
    <property type="entry name" value="Radical SAM enzymes"/>
    <property type="match status" value="1"/>
</dbReference>
<dbReference type="PROSITE" id="PS51449">
    <property type="entry name" value="MTTASE_N"/>
    <property type="match status" value="1"/>
</dbReference>
<dbReference type="PROSITE" id="PS01278">
    <property type="entry name" value="MTTASE_RADICAL"/>
    <property type="match status" value="1"/>
</dbReference>
<dbReference type="PROSITE" id="PS51918">
    <property type="entry name" value="RADICAL_SAM"/>
    <property type="match status" value="1"/>
</dbReference>
<dbReference type="PROSITE" id="PS50926">
    <property type="entry name" value="TRAM"/>
    <property type="match status" value="1"/>
</dbReference>
<keyword id="KW-0004">4Fe-4S</keyword>
<keyword id="KW-0963">Cytoplasm</keyword>
<keyword id="KW-0408">Iron</keyword>
<keyword id="KW-0411">Iron-sulfur</keyword>
<keyword id="KW-0479">Metal-binding</keyword>
<keyword id="KW-0949">S-adenosyl-L-methionine</keyword>
<keyword id="KW-0808">Transferase</keyword>
<keyword id="KW-0819">tRNA processing</keyword>
<protein>
    <recommendedName>
        <fullName evidence="1">tRNA-2-methylthio-N(6)-dimethylallyladenosine synthase</fullName>
        <ecNumber evidence="1">2.8.4.3</ecNumber>
    </recommendedName>
    <alternativeName>
        <fullName evidence="1">(Dimethylallyl)adenosine tRNA methylthiotransferase MiaB</fullName>
    </alternativeName>
    <alternativeName>
        <fullName evidence="1">tRNA-i(6)A37 methylthiotransferase</fullName>
    </alternativeName>
</protein>
<evidence type="ECO:0000255" key="1">
    <source>
        <dbReference type="HAMAP-Rule" id="MF_01864"/>
    </source>
</evidence>
<evidence type="ECO:0000255" key="2">
    <source>
        <dbReference type="PROSITE-ProRule" id="PRU01266"/>
    </source>
</evidence>
<reference key="1">
    <citation type="journal article" date="2008" name="Biol. Direct">
        <title>Complete genome sequence of the extremely acidophilic methanotroph isolate V4, Methylacidiphilum infernorum, a representative of the bacterial phylum Verrucomicrobia.</title>
        <authorList>
            <person name="Hou S."/>
            <person name="Makarova K.S."/>
            <person name="Saw J.H."/>
            <person name="Senin P."/>
            <person name="Ly B.V."/>
            <person name="Zhou Z."/>
            <person name="Ren Y."/>
            <person name="Wang J."/>
            <person name="Galperin M.Y."/>
            <person name="Omelchenko M.V."/>
            <person name="Wolf Y.I."/>
            <person name="Yutin N."/>
            <person name="Koonin E.V."/>
            <person name="Stott M.B."/>
            <person name="Mountain B.W."/>
            <person name="Crowe M.A."/>
            <person name="Smirnova A.V."/>
            <person name="Dunfield P.F."/>
            <person name="Feng L."/>
            <person name="Wang L."/>
            <person name="Alam M."/>
        </authorList>
    </citation>
    <scope>NUCLEOTIDE SEQUENCE [LARGE SCALE GENOMIC DNA]</scope>
    <source>
        <strain>Isolate V4</strain>
    </source>
</reference>
<accession>B3E0M0</accession>
<proteinExistence type="inferred from homology"/>
<comment type="function">
    <text evidence="1">Catalyzes the methylthiolation of N6-(dimethylallyl)adenosine (i(6)A), leading to the formation of 2-methylthio-N6-(dimethylallyl)adenosine (ms(2)i(6)A) at position 37 in tRNAs that read codons beginning with uridine.</text>
</comment>
<comment type="catalytic activity">
    <reaction evidence="1">
        <text>N(6)-dimethylallyladenosine(37) in tRNA + (sulfur carrier)-SH + AH2 + 2 S-adenosyl-L-methionine = 2-methylsulfanyl-N(6)-dimethylallyladenosine(37) in tRNA + (sulfur carrier)-H + 5'-deoxyadenosine + L-methionine + A + S-adenosyl-L-homocysteine + 2 H(+)</text>
        <dbReference type="Rhea" id="RHEA:37067"/>
        <dbReference type="Rhea" id="RHEA-COMP:10375"/>
        <dbReference type="Rhea" id="RHEA-COMP:10376"/>
        <dbReference type="Rhea" id="RHEA-COMP:14737"/>
        <dbReference type="Rhea" id="RHEA-COMP:14739"/>
        <dbReference type="ChEBI" id="CHEBI:13193"/>
        <dbReference type="ChEBI" id="CHEBI:15378"/>
        <dbReference type="ChEBI" id="CHEBI:17319"/>
        <dbReference type="ChEBI" id="CHEBI:17499"/>
        <dbReference type="ChEBI" id="CHEBI:29917"/>
        <dbReference type="ChEBI" id="CHEBI:57844"/>
        <dbReference type="ChEBI" id="CHEBI:57856"/>
        <dbReference type="ChEBI" id="CHEBI:59789"/>
        <dbReference type="ChEBI" id="CHEBI:64428"/>
        <dbReference type="ChEBI" id="CHEBI:74415"/>
        <dbReference type="ChEBI" id="CHEBI:74417"/>
        <dbReference type="EC" id="2.8.4.3"/>
    </reaction>
</comment>
<comment type="cofactor">
    <cofactor evidence="1">
        <name>[4Fe-4S] cluster</name>
        <dbReference type="ChEBI" id="CHEBI:49883"/>
    </cofactor>
    <text evidence="1">Binds 2 [4Fe-4S] clusters. One cluster is coordinated with 3 cysteines and an exchangeable S-adenosyl-L-methionine.</text>
</comment>
<comment type="subunit">
    <text evidence="1">Monomer.</text>
</comment>
<comment type="subcellular location">
    <subcellularLocation>
        <location evidence="1">Cytoplasm</location>
    </subcellularLocation>
</comment>
<comment type="similarity">
    <text evidence="1">Belongs to the methylthiotransferase family. MiaB subfamily.</text>
</comment>
<organism>
    <name type="scientific">Methylacidiphilum infernorum (isolate V4)</name>
    <name type="common">Methylokorus infernorum (strain V4)</name>
    <dbReference type="NCBI Taxonomy" id="481448"/>
    <lineage>
        <taxon>Bacteria</taxon>
        <taxon>Pseudomonadati</taxon>
        <taxon>Verrucomicrobiota</taxon>
        <taxon>Methylacidiphilae</taxon>
        <taxon>Methylacidiphilales</taxon>
        <taxon>Methylacidiphilaceae</taxon>
        <taxon>Methylacidiphilum (ex Ratnadevi et al. 2023)</taxon>
    </lineage>
</organism>
<feature type="chain" id="PRO_0000374373" description="tRNA-2-methylthio-N(6)-dimethylallyladenosine synthase">
    <location>
        <begin position="1"/>
        <end position="467"/>
    </location>
</feature>
<feature type="domain" description="MTTase N-terminal" evidence="1">
    <location>
        <begin position="2"/>
        <end position="118"/>
    </location>
</feature>
<feature type="domain" description="Radical SAM core" evidence="2">
    <location>
        <begin position="145"/>
        <end position="379"/>
    </location>
</feature>
<feature type="domain" description="TRAM" evidence="1">
    <location>
        <begin position="382"/>
        <end position="445"/>
    </location>
</feature>
<feature type="binding site" evidence="1">
    <location>
        <position position="11"/>
    </location>
    <ligand>
        <name>[4Fe-4S] cluster</name>
        <dbReference type="ChEBI" id="CHEBI:49883"/>
        <label>1</label>
    </ligand>
</feature>
<feature type="binding site" evidence="1">
    <location>
        <position position="47"/>
    </location>
    <ligand>
        <name>[4Fe-4S] cluster</name>
        <dbReference type="ChEBI" id="CHEBI:49883"/>
        <label>1</label>
    </ligand>
</feature>
<feature type="binding site" evidence="1">
    <location>
        <position position="81"/>
    </location>
    <ligand>
        <name>[4Fe-4S] cluster</name>
        <dbReference type="ChEBI" id="CHEBI:49883"/>
        <label>1</label>
    </ligand>
</feature>
<feature type="binding site" evidence="1">
    <location>
        <position position="159"/>
    </location>
    <ligand>
        <name>[4Fe-4S] cluster</name>
        <dbReference type="ChEBI" id="CHEBI:49883"/>
        <label>2</label>
        <note>4Fe-4S-S-AdoMet</note>
    </ligand>
</feature>
<feature type="binding site" evidence="1">
    <location>
        <position position="163"/>
    </location>
    <ligand>
        <name>[4Fe-4S] cluster</name>
        <dbReference type="ChEBI" id="CHEBI:49883"/>
        <label>2</label>
        <note>4Fe-4S-S-AdoMet</note>
    </ligand>
</feature>
<feature type="binding site" evidence="1">
    <location>
        <position position="166"/>
    </location>
    <ligand>
        <name>[4Fe-4S] cluster</name>
        <dbReference type="ChEBI" id="CHEBI:49883"/>
        <label>2</label>
        <note>4Fe-4S-S-AdoMet</note>
    </ligand>
</feature>
<sequence>MPSVFIKTFGCQMNVRDSEQVLQDFIERGYQIASSEKWADIILINTCSVRAMAEEKAIDKLASLKTAKKKNPNLVLGIIGCMAQNRGREIAEKYRFVDLVLGTQKFHKVAEIADNLLKNPDRSSSYVDLSKEEAAHNAINKHLSTKAQPIAYVSIMQGCSMHCSFCIVPTTRGEERSRPIDEIFEEVKRLAETSVKEIVLLGQIVNRYGAKEFPWVKGKSPFVQLLEKLSTIEEIKRIRFTSPHPLGFKEDLIAALRDIPQLCEHVHLPVQSGSDKILKAMRRGYSRSKFLSLVDKLRKAIPQLALSTDIIVGYPGETEEDFQQTCSLLNEVRFDNAFIFRYSAREGTTAASLGDQLSEEVKFERNYRLLEIQNKITMEKAQKWVGQVVEILVEGESKKNASKFQGRTRTNHLVIIPKNERWRGEFLPVRIVETTGHTFYGTPLISGIDEALQFDLQEEINPAPIVS</sequence>
<name>MIAB_METI4</name>
<gene>
    <name evidence="1" type="primary">miaB</name>
    <name type="ordered locus">Minf_0719</name>
</gene>